<keyword id="KW-0963">Cytoplasm</keyword>
<keyword id="KW-0274">FAD</keyword>
<keyword id="KW-0285">Flavoprotein</keyword>
<keyword id="KW-0520">NAD</keyword>
<keyword id="KW-1185">Reference proteome</keyword>
<keyword id="KW-0819">tRNA processing</keyword>
<evidence type="ECO:0000255" key="1">
    <source>
        <dbReference type="HAMAP-Rule" id="MF_00129"/>
    </source>
</evidence>
<proteinExistence type="inferred from homology"/>
<dbReference type="EMBL" id="CP000029">
    <property type="protein sequence ID" value="AAW53389.1"/>
    <property type="molecule type" value="Genomic_DNA"/>
</dbReference>
<dbReference type="RefSeq" id="WP_001831818.1">
    <property type="nucleotide sequence ID" value="NC_002976.3"/>
</dbReference>
<dbReference type="SMR" id="Q5HS35"/>
<dbReference type="STRING" id="176279.SERP0004"/>
<dbReference type="GeneID" id="50019721"/>
<dbReference type="KEGG" id="ser:SERP0004"/>
<dbReference type="eggNOG" id="COG0445">
    <property type="taxonomic scope" value="Bacteria"/>
</dbReference>
<dbReference type="HOGENOM" id="CLU_007831_2_2_9"/>
<dbReference type="Proteomes" id="UP000000531">
    <property type="component" value="Chromosome"/>
</dbReference>
<dbReference type="GO" id="GO:0005829">
    <property type="term" value="C:cytosol"/>
    <property type="evidence" value="ECO:0007669"/>
    <property type="project" value="TreeGrafter"/>
</dbReference>
<dbReference type="GO" id="GO:0050660">
    <property type="term" value="F:flavin adenine dinucleotide binding"/>
    <property type="evidence" value="ECO:0007669"/>
    <property type="project" value="UniProtKB-UniRule"/>
</dbReference>
<dbReference type="GO" id="GO:0030488">
    <property type="term" value="P:tRNA methylation"/>
    <property type="evidence" value="ECO:0007669"/>
    <property type="project" value="TreeGrafter"/>
</dbReference>
<dbReference type="GO" id="GO:0002098">
    <property type="term" value="P:tRNA wobble uridine modification"/>
    <property type="evidence" value="ECO:0007669"/>
    <property type="project" value="InterPro"/>
</dbReference>
<dbReference type="FunFam" id="1.10.10.1800:FF:000001">
    <property type="entry name" value="tRNA uridine 5-carboxymethylaminomethyl modification enzyme MnmG"/>
    <property type="match status" value="1"/>
</dbReference>
<dbReference type="FunFam" id="1.10.150.570:FF:000001">
    <property type="entry name" value="tRNA uridine 5-carboxymethylaminomethyl modification enzyme MnmG"/>
    <property type="match status" value="1"/>
</dbReference>
<dbReference type="FunFam" id="3.50.50.60:FF:000002">
    <property type="entry name" value="tRNA uridine 5-carboxymethylaminomethyl modification enzyme MnmG"/>
    <property type="match status" value="1"/>
</dbReference>
<dbReference type="FunFam" id="3.50.50.60:FF:000063">
    <property type="entry name" value="tRNA uridine 5-carboxymethylaminomethyl modification enzyme MnmG"/>
    <property type="match status" value="1"/>
</dbReference>
<dbReference type="Gene3D" id="3.50.50.60">
    <property type="entry name" value="FAD/NAD(P)-binding domain"/>
    <property type="match status" value="2"/>
</dbReference>
<dbReference type="Gene3D" id="1.10.150.570">
    <property type="entry name" value="GidA associated domain, C-terminal subdomain"/>
    <property type="match status" value="1"/>
</dbReference>
<dbReference type="Gene3D" id="1.10.10.1800">
    <property type="entry name" value="tRNA uridine 5-carboxymethylaminomethyl modification enzyme MnmG/GidA"/>
    <property type="match status" value="1"/>
</dbReference>
<dbReference type="HAMAP" id="MF_00129">
    <property type="entry name" value="MnmG_GidA"/>
    <property type="match status" value="1"/>
</dbReference>
<dbReference type="InterPro" id="IPR036188">
    <property type="entry name" value="FAD/NAD-bd_sf"/>
</dbReference>
<dbReference type="InterPro" id="IPR049312">
    <property type="entry name" value="GIDA_C_N"/>
</dbReference>
<dbReference type="InterPro" id="IPR004416">
    <property type="entry name" value="MnmG"/>
</dbReference>
<dbReference type="InterPro" id="IPR002218">
    <property type="entry name" value="MnmG-rel"/>
</dbReference>
<dbReference type="InterPro" id="IPR020595">
    <property type="entry name" value="MnmG-rel_CS"/>
</dbReference>
<dbReference type="InterPro" id="IPR026904">
    <property type="entry name" value="MnmG_C"/>
</dbReference>
<dbReference type="InterPro" id="IPR047001">
    <property type="entry name" value="MnmG_C_subdom"/>
</dbReference>
<dbReference type="InterPro" id="IPR044920">
    <property type="entry name" value="MnmG_C_subdom_sf"/>
</dbReference>
<dbReference type="InterPro" id="IPR040131">
    <property type="entry name" value="MnmG_N"/>
</dbReference>
<dbReference type="NCBIfam" id="TIGR00136">
    <property type="entry name" value="mnmG_gidA"/>
    <property type="match status" value="1"/>
</dbReference>
<dbReference type="PANTHER" id="PTHR11806">
    <property type="entry name" value="GLUCOSE INHIBITED DIVISION PROTEIN A"/>
    <property type="match status" value="1"/>
</dbReference>
<dbReference type="PANTHER" id="PTHR11806:SF0">
    <property type="entry name" value="PROTEIN MTO1 HOMOLOG, MITOCHONDRIAL"/>
    <property type="match status" value="1"/>
</dbReference>
<dbReference type="Pfam" id="PF01134">
    <property type="entry name" value="GIDA"/>
    <property type="match status" value="1"/>
</dbReference>
<dbReference type="Pfam" id="PF21680">
    <property type="entry name" value="GIDA_C_1st"/>
    <property type="match status" value="1"/>
</dbReference>
<dbReference type="Pfam" id="PF13932">
    <property type="entry name" value="SAM_GIDA_C"/>
    <property type="match status" value="1"/>
</dbReference>
<dbReference type="PRINTS" id="PR00411">
    <property type="entry name" value="PNDRDTASEI"/>
</dbReference>
<dbReference type="SMART" id="SM01228">
    <property type="entry name" value="GIDA_assoc_3"/>
    <property type="match status" value="1"/>
</dbReference>
<dbReference type="SUPFAM" id="SSF51905">
    <property type="entry name" value="FAD/NAD(P)-binding domain"/>
    <property type="match status" value="1"/>
</dbReference>
<dbReference type="PROSITE" id="PS01280">
    <property type="entry name" value="GIDA_1"/>
    <property type="match status" value="1"/>
</dbReference>
<dbReference type="PROSITE" id="PS01281">
    <property type="entry name" value="GIDA_2"/>
    <property type="match status" value="1"/>
</dbReference>
<name>MNMG_STAEQ</name>
<organism>
    <name type="scientific">Staphylococcus epidermidis (strain ATCC 35984 / DSM 28319 / BCRC 17069 / CCUG 31568 / BM 3577 / RP62A)</name>
    <dbReference type="NCBI Taxonomy" id="176279"/>
    <lineage>
        <taxon>Bacteria</taxon>
        <taxon>Bacillati</taxon>
        <taxon>Bacillota</taxon>
        <taxon>Bacilli</taxon>
        <taxon>Bacillales</taxon>
        <taxon>Staphylococcaceae</taxon>
        <taxon>Staphylococcus</taxon>
    </lineage>
</organism>
<sequence length="625" mass="69805">MVQEYDVVVIGAGHAGIEAGLASARRGAKTLMLTINLDNIAFMPCNPSVGGPAKGIVVREIDALGGQMAKTIDKTHIQMRMLNTGKGPAVRALRAQADKVLYQQEMKRVLENEDNLDIMQGMVDELIIEDNEVKGVRTNIGTEYRSKAVIITTGTFLRGEIILGNLKYSSGPNHQLPSVTLADNLRKLGFDIVRFKTGTPPRVNARTIDYSKTEIQPGDDIGRAFSFETTEFILDQLPCWLTYTNGDTHQVIDDNLHLSAMYSGMIKGTGPRYCPSIEDKFVRFNDKPRHQLFLEPEGRNTNEVYVQGLSTSLPEHVQRQMLETIPGLEKADMMRAGYAIEYDAIVPTQLWPTLETKAIKNLYTAGQINGTSGYEEAAGQGIMAGINAAGNVLGTGEKILSRSDAYIGVLIDDLVTKGTNEPYRLLTSRAEYRLLLRHDNADLRLTDMGYELGLISEERYARFNEKRQQIKDEIQRLTDVRIKPNEHTQAIIEAKGGSRLKDGILAIDLLRRPEMNYETILEILEESHQLPEAVEEQVEIQTKYEGYINKSLQQVEKVKRMEAKKIPEDLDYSKVDSLASEAREKLAEVKPLNIAQASRISGVNPADISILLVYLEQGKLQRVKQ</sequence>
<accession>Q5HS35</accession>
<protein>
    <recommendedName>
        <fullName evidence="1">tRNA uridine 5-carboxymethylaminomethyl modification enzyme MnmG</fullName>
    </recommendedName>
    <alternativeName>
        <fullName evidence="1">Glucose-inhibited division protein A</fullName>
    </alternativeName>
</protein>
<reference key="1">
    <citation type="journal article" date="2005" name="J. Bacteriol.">
        <title>Insights on evolution of virulence and resistance from the complete genome analysis of an early methicillin-resistant Staphylococcus aureus strain and a biofilm-producing methicillin-resistant Staphylococcus epidermidis strain.</title>
        <authorList>
            <person name="Gill S.R."/>
            <person name="Fouts D.E."/>
            <person name="Archer G.L."/>
            <person name="Mongodin E.F."/>
            <person name="DeBoy R.T."/>
            <person name="Ravel J."/>
            <person name="Paulsen I.T."/>
            <person name="Kolonay J.F."/>
            <person name="Brinkac L.M."/>
            <person name="Beanan M.J."/>
            <person name="Dodson R.J."/>
            <person name="Daugherty S.C."/>
            <person name="Madupu R."/>
            <person name="Angiuoli S.V."/>
            <person name="Durkin A.S."/>
            <person name="Haft D.H."/>
            <person name="Vamathevan J.J."/>
            <person name="Khouri H."/>
            <person name="Utterback T.R."/>
            <person name="Lee C."/>
            <person name="Dimitrov G."/>
            <person name="Jiang L."/>
            <person name="Qin H."/>
            <person name="Weidman J."/>
            <person name="Tran K."/>
            <person name="Kang K.H."/>
            <person name="Hance I.R."/>
            <person name="Nelson K.E."/>
            <person name="Fraser C.M."/>
        </authorList>
    </citation>
    <scope>NUCLEOTIDE SEQUENCE [LARGE SCALE GENOMIC DNA]</scope>
    <source>
        <strain>ATCC 35984 / DSM 28319 / BCRC 17069 / CCUG 31568 / BM 3577 / RP62A</strain>
    </source>
</reference>
<gene>
    <name evidence="1" type="primary">mnmG</name>
    <name evidence="1" type="synonym">gidA</name>
    <name type="ordered locus">SERP0004</name>
</gene>
<comment type="function">
    <text evidence="1">NAD-binding protein involved in the addition of a carboxymethylaminomethyl (cmnm) group at the wobble position (U34) of certain tRNAs, forming tRNA-cmnm(5)s(2)U34.</text>
</comment>
<comment type="cofactor">
    <cofactor evidence="1">
        <name>FAD</name>
        <dbReference type="ChEBI" id="CHEBI:57692"/>
    </cofactor>
</comment>
<comment type="subunit">
    <text evidence="1">Homodimer. Heterotetramer of two MnmE and two MnmG subunits.</text>
</comment>
<comment type="subcellular location">
    <subcellularLocation>
        <location evidence="1">Cytoplasm</location>
    </subcellularLocation>
</comment>
<comment type="similarity">
    <text evidence="1">Belongs to the MnmG family.</text>
</comment>
<feature type="chain" id="PRO_0000117182" description="tRNA uridine 5-carboxymethylaminomethyl modification enzyme MnmG">
    <location>
        <begin position="1"/>
        <end position="625"/>
    </location>
</feature>
<feature type="binding site" evidence="1">
    <location>
        <begin position="11"/>
        <end position="16"/>
    </location>
    <ligand>
        <name>FAD</name>
        <dbReference type="ChEBI" id="CHEBI:57692"/>
    </ligand>
</feature>
<feature type="binding site" evidence="1">
    <location>
        <position position="123"/>
    </location>
    <ligand>
        <name>FAD</name>
        <dbReference type="ChEBI" id="CHEBI:57692"/>
    </ligand>
</feature>
<feature type="binding site" evidence="1">
    <location>
        <position position="178"/>
    </location>
    <ligand>
        <name>FAD</name>
        <dbReference type="ChEBI" id="CHEBI:57692"/>
    </ligand>
</feature>
<feature type="binding site" evidence="1">
    <location>
        <begin position="270"/>
        <end position="284"/>
    </location>
    <ligand>
        <name>NAD(+)</name>
        <dbReference type="ChEBI" id="CHEBI:57540"/>
    </ligand>
</feature>
<feature type="binding site" evidence="1">
    <location>
        <position position="367"/>
    </location>
    <ligand>
        <name>FAD</name>
        <dbReference type="ChEBI" id="CHEBI:57692"/>
    </ligand>
</feature>